<sequence>MNKVITDLDKALSALKDGDTILVGGFGLCGIPEYAIDYIYKKGIKDLIVVSNNCGVDDFGLGILLEKKQIKKIIASYVGENKIFESQMLNGEIEVVLTPQGTLAENLHAGGAGIPAYYTPTGVGTLIAQGKESREFNGKEYILERAITGDYGLIKAYKSDTLGNLVFRKTARNFNPLCAMAAKICVAEVEEIVPAGELDPDEIHLPGIYVQHIYKGEKFEKRIEKITTRSTK</sequence>
<organism>
    <name type="scientific">Helicobacter pylori (strain ATCC 700392 / 26695)</name>
    <name type="common">Campylobacter pylori</name>
    <dbReference type="NCBI Taxonomy" id="85962"/>
    <lineage>
        <taxon>Bacteria</taxon>
        <taxon>Pseudomonadati</taxon>
        <taxon>Campylobacterota</taxon>
        <taxon>Epsilonproteobacteria</taxon>
        <taxon>Campylobacterales</taxon>
        <taxon>Helicobacteraceae</taxon>
        <taxon>Helicobacter</taxon>
    </lineage>
</organism>
<gene>
    <name type="primary">scoA</name>
    <name type="ordered locus">HP_0691</name>
</gene>
<evidence type="ECO:0000255" key="1"/>
<evidence type="ECO:0000269" key="2">
    <source>
    </source>
</evidence>
<evidence type="ECO:0000305" key="3"/>
<evidence type="ECO:0007829" key="4">
    <source>
        <dbReference type="PDB" id="3RRL"/>
    </source>
</evidence>
<dbReference type="EC" id="2.8.3.5"/>
<dbReference type="EMBL" id="AE000511">
    <property type="protein sequence ID" value="AAD07743.1"/>
    <property type="molecule type" value="Genomic_DNA"/>
</dbReference>
<dbReference type="PIR" id="C64606">
    <property type="entry name" value="C64606"/>
</dbReference>
<dbReference type="RefSeq" id="NP_207485.1">
    <property type="nucleotide sequence ID" value="NC_000915.1"/>
</dbReference>
<dbReference type="RefSeq" id="WP_001045154.1">
    <property type="nucleotide sequence ID" value="NC_018939.1"/>
</dbReference>
<dbReference type="PDB" id="3RRL">
    <property type="method" value="X-ray"/>
    <property type="resolution" value="2.29 A"/>
    <property type="chains" value="A/C=1-232"/>
</dbReference>
<dbReference type="PDBsum" id="3RRL"/>
<dbReference type="SMR" id="P56006"/>
<dbReference type="DIP" id="DIP-3481N"/>
<dbReference type="FunCoup" id="P56006">
    <property type="interactions" value="75"/>
</dbReference>
<dbReference type="IntAct" id="P56006">
    <property type="interactions" value="2"/>
</dbReference>
<dbReference type="MINT" id="P56006"/>
<dbReference type="STRING" id="85962.HP_0691"/>
<dbReference type="PaxDb" id="85962-C694_03560"/>
<dbReference type="EnsemblBacteria" id="AAD07743">
    <property type="protein sequence ID" value="AAD07743"/>
    <property type="gene ID" value="HP_0691"/>
</dbReference>
<dbReference type="KEGG" id="heo:C694_03560"/>
<dbReference type="KEGG" id="hpy:HP_0691"/>
<dbReference type="PATRIC" id="fig|85962.47.peg.739"/>
<dbReference type="eggNOG" id="COG1788">
    <property type="taxonomic scope" value="Bacteria"/>
</dbReference>
<dbReference type="InParanoid" id="P56006"/>
<dbReference type="OrthoDB" id="9777193at2"/>
<dbReference type="PhylomeDB" id="P56006"/>
<dbReference type="BioCyc" id="MetaCyc:HP_RS03380-MONOMER"/>
<dbReference type="EvolutionaryTrace" id="P56006"/>
<dbReference type="Proteomes" id="UP000000429">
    <property type="component" value="Chromosome"/>
</dbReference>
<dbReference type="GO" id="GO:0008260">
    <property type="term" value="F:succinyl-CoA:3-oxo-acid CoA-transferase activity"/>
    <property type="evidence" value="ECO:0007669"/>
    <property type="project" value="UniProtKB-EC"/>
</dbReference>
<dbReference type="Gene3D" id="3.40.1080.10">
    <property type="entry name" value="Glutaconate Coenzyme A-transferase"/>
    <property type="match status" value="1"/>
</dbReference>
<dbReference type="InterPro" id="IPR012792">
    <property type="entry name" value="3-oxoacid_CoA-transf_A"/>
</dbReference>
<dbReference type="InterPro" id="IPR004165">
    <property type="entry name" value="CoA_trans_fam_I"/>
</dbReference>
<dbReference type="InterPro" id="IPR004163">
    <property type="entry name" value="CoA_transf_BS"/>
</dbReference>
<dbReference type="InterPro" id="IPR037171">
    <property type="entry name" value="NagB/RpiA_transferase-like"/>
</dbReference>
<dbReference type="NCBIfam" id="TIGR02429">
    <property type="entry name" value="pcaI_scoA_fam"/>
    <property type="match status" value="1"/>
</dbReference>
<dbReference type="PANTHER" id="PTHR13707:SF60">
    <property type="entry name" value="ACETATE COA-TRANSFERASE SUBUNIT ALPHA"/>
    <property type="match status" value="1"/>
</dbReference>
<dbReference type="PANTHER" id="PTHR13707">
    <property type="entry name" value="KETOACID-COENZYME A TRANSFERASE"/>
    <property type="match status" value="1"/>
</dbReference>
<dbReference type="Pfam" id="PF01144">
    <property type="entry name" value="CoA_trans"/>
    <property type="match status" value="1"/>
</dbReference>
<dbReference type="SMART" id="SM00882">
    <property type="entry name" value="CoA_trans"/>
    <property type="match status" value="1"/>
</dbReference>
<dbReference type="SUPFAM" id="SSF100950">
    <property type="entry name" value="NagB/RpiA/CoA transferase-like"/>
    <property type="match status" value="1"/>
</dbReference>
<dbReference type="PROSITE" id="PS01273">
    <property type="entry name" value="COA_TRANSF_1"/>
    <property type="match status" value="1"/>
</dbReference>
<proteinExistence type="evidence at protein level"/>
<reference key="1">
    <citation type="journal article" date="1997" name="Nature">
        <title>The complete genome sequence of the gastric pathogen Helicobacter pylori.</title>
        <authorList>
            <person name="Tomb J.-F."/>
            <person name="White O."/>
            <person name="Kerlavage A.R."/>
            <person name="Clayton R.A."/>
            <person name="Sutton G.G."/>
            <person name="Fleischmann R.D."/>
            <person name="Ketchum K.A."/>
            <person name="Klenk H.-P."/>
            <person name="Gill S.R."/>
            <person name="Dougherty B.A."/>
            <person name="Nelson K.E."/>
            <person name="Quackenbush J."/>
            <person name="Zhou L."/>
            <person name="Kirkness E.F."/>
            <person name="Peterson S.N."/>
            <person name="Loftus B.J."/>
            <person name="Richardson D.L."/>
            <person name="Dodson R.J."/>
            <person name="Khalak H.G."/>
            <person name="Glodek A."/>
            <person name="McKenney K."/>
            <person name="FitzGerald L.M."/>
            <person name="Lee N."/>
            <person name="Adams M.D."/>
            <person name="Hickey E.K."/>
            <person name="Berg D.E."/>
            <person name="Gocayne J.D."/>
            <person name="Utterback T.R."/>
            <person name="Peterson J.D."/>
            <person name="Kelley J.M."/>
            <person name="Cotton M.D."/>
            <person name="Weidman J.F."/>
            <person name="Fujii C."/>
            <person name="Bowman C."/>
            <person name="Watthey L."/>
            <person name="Wallin E."/>
            <person name="Hayes W.S."/>
            <person name="Borodovsky M."/>
            <person name="Karp P.D."/>
            <person name="Smith H.O."/>
            <person name="Fraser C.M."/>
            <person name="Venter J.C."/>
        </authorList>
    </citation>
    <scope>NUCLEOTIDE SEQUENCE [LARGE SCALE GENOMIC DNA]</scope>
    <source>
        <strain>ATCC 700392 / 26695</strain>
    </source>
</reference>
<reference key="2">
    <citation type="journal article" date="1997" name="J. Biol. Chem.">
        <title>Cloning and characterization of Helicobacter pylori succinyl CoA:acetoacetate CoA-transferase, a novel prokaryotic member of the CoA-transferase family.</title>
        <authorList>
            <person name="Corthesy-Theulaz I.E."/>
            <person name="Bergonzelli G.E."/>
            <person name="Henry H."/>
            <person name="Bachmann D."/>
            <person name="Schorderet D.F."/>
            <person name="Blum A.L."/>
            <person name="Ornston L.N."/>
        </authorList>
    </citation>
    <scope>NUCLEOTIDE SEQUENCE [GENOMIC DNA]</scope>
    <scope>CATALYTIC ACTIVITY</scope>
    <source>
        <strain>69A</strain>
    </source>
</reference>
<comment type="catalytic activity">
    <reaction evidence="2">
        <text>a 3-oxo acid + succinyl-CoA = a 3-oxoacyl-CoA + succinate</text>
        <dbReference type="Rhea" id="RHEA:24564"/>
        <dbReference type="ChEBI" id="CHEBI:30031"/>
        <dbReference type="ChEBI" id="CHEBI:35973"/>
        <dbReference type="ChEBI" id="CHEBI:57292"/>
        <dbReference type="ChEBI" id="CHEBI:90726"/>
        <dbReference type="EC" id="2.8.3.5"/>
    </reaction>
</comment>
<comment type="subunit">
    <text>Heterodimer of a subunit A and a subunit B.</text>
</comment>
<comment type="interaction">
    <interactant intactId="EBI-7723842">
        <id>P56006</id>
    </interactant>
    <interactant intactId="EBI-7724043">
        <id>P56007</id>
        <label>scoB</label>
    </interactant>
    <organismsDiffer>false</organismsDiffer>
    <experiments>3</experiments>
</comment>
<comment type="similarity">
    <text evidence="3">Belongs to the 3-oxoacid CoA-transferase subunit A family.</text>
</comment>
<feature type="chain" id="PRO_0000157909" description="Succinyl-CoA:3-ketoacid coenzyme A transferase subunit A">
    <location>
        <begin position="1"/>
        <end position="232"/>
    </location>
</feature>
<feature type="binding site" evidence="1">
    <location>
        <begin position="24"/>
        <end position="30"/>
    </location>
    <ligand>
        <name>CoA</name>
        <dbReference type="ChEBI" id="CHEBI:57287"/>
    </ligand>
</feature>
<feature type="sequence conflict" description="In Ref. 2; no nucleotide entry." evidence="3" ref="2">
    <original>A</original>
    <variation>T</variation>
    <location>
        <position position="14"/>
    </location>
</feature>
<feature type="sequence conflict" description="In Ref. 2; no nucleotide entry." evidence="3" ref="2">
    <original>HA</original>
    <variation>RP</variation>
    <location>
        <begin position="108"/>
        <end position="109"/>
    </location>
</feature>
<feature type="sequence conflict" description="In Ref. 2; no nucleotide entry." evidence="3" ref="2">
    <original>AYYTPT</original>
    <variation>LTTPQP</variation>
    <location>
        <begin position="116"/>
        <end position="121"/>
    </location>
</feature>
<feature type="sequence conflict" description="In Ref. 2; no nucleotide entry." evidence="3" ref="2">
    <original>QGKESREFNGK</original>
    <variation>PRQGIQGSLTAR</variation>
    <location>
        <begin position="129"/>
        <end position="139"/>
    </location>
</feature>
<feature type="sequence conflict" description="In Ref. 2; no nucleotide entry." evidence="3" ref="2">
    <original>T</original>
    <variation>A</variation>
    <location>
        <position position="231"/>
    </location>
</feature>
<feature type="strand" evidence="4">
    <location>
        <begin position="4"/>
        <end position="7"/>
    </location>
</feature>
<feature type="helix" evidence="4">
    <location>
        <begin position="9"/>
        <end position="12"/>
    </location>
</feature>
<feature type="strand" evidence="4">
    <location>
        <begin position="20"/>
        <end position="23"/>
    </location>
</feature>
<feature type="helix" evidence="4">
    <location>
        <begin position="33"/>
        <end position="42"/>
    </location>
</feature>
<feature type="strand" evidence="4">
    <location>
        <begin position="46"/>
        <end position="50"/>
    </location>
</feature>
<feature type="strand" evidence="4">
    <location>
        <begin position="57"/>
        <end position="59"/>
    </location>
</feature>
<feature type="helix" evidence="4">
    <location>
        <begin position="60"/>
        <end position="65"/>
    </location>
</feature>
<feature type="turn" evidence="4">
    <location>
        <begin position="66"/>
        <end position="68"/>
    </location>
</feature>
<feature type="strand" evidence="4">
    <location>
        <begin position="70"/>
        <end position="76"/>
    </location>
</feature>
<feature type="helix" evidence="4">
    <location>
        <begin position="82"/>
        <end position="89"/>
    </location>
</feature>
<feature type="strand" evidence="4">
    <location>
        <begin position="92"/>
        <end position="97"/>
    </location>
</feature>
<feature type="helix" evidence="4">
    <location>
        <begin position="100"/>
        <end position="112"/>
    </location>
</feature>
<feature type="strand" evidence="4">
    <location>
        <begin position="116"/>
        <end position="120"/>
    </location>
</feature>
<feature type="turn" evidence="4">
    <location>
        <begin position="121"/>
        <end position="124"/>
    </location>
</feature>
<feature type="helix" evidence="4">
    <location>
        <begin position="126"/>
        <end position="128"/>
    </location>
</feature>
<feature type="strand" evidence="4">
    <location>
        <begin position="133"/>
        <end position="136"/>
    </location>
</feature>
<feature type="strand" evidence="4">
    <location>
        <begin position="139"/>
        <end position="145"/>
    </location>
</feature>
<feature type="strand" evidence="4">
    <location>
        <begin position="149"/>
        <end position="155"/>
    </location>
</feature>
<feature type="strand" evidence="4">
    <location>
        <begin position="157"/>
        <end position="160"/>
    </location>
</feature>
<feature type="helix" evidence="4">
    <location>
        <begin position="169"/>
        <end position="171"/>
    </location>
</feature>
<feature type="helix" evidence="4">
    <location>
        <begin position="175"/>
        <end position="180"/>
    </location>
</feature>
<feature type="strand" evidence="4">
    <location>
        <begin position="182"/>
        <end position="193"/>
    </location>
</feature>
<feature type="turn" evidence="4">
    <location>
        <begin position="200"/>
        <end position="202"/>
    </location>
</feature>
<feature type="helix" evidence="4">
    <location>
        <begin position="207"/>
        <end position="209"/>
    </location>
</feature>
<feature type="strand" evidence="4">
    <location>
        <begin position="211"/>
        <end position="215"/>
    </location>
</feature>
<protein>
    <recommendedName>
        <fullName>Succinyl-CoA:3-ketoacid coenzyme A transferase subunit A</fullName>
        <ecNumber>2.8.3.5</ecNumber>
    </recommendedName>
    <alternativeName>
        <fullName>Succinyl-CoA:3-oxoacid CoA-transferase</fullName>
        <shortName>OXCT A</shortName>
    </alternativeName>
</protein>
<name>SCOA_HELPY</name>
<keyword id="KW-0002">3D-structure</keyword>
<keyword id="KW-1185">Reference proteome</keyword>
<keyword id="KW-0808">Transferase</keyword>
<accession>P56006</accession>